<name>HIS1_STAAB</name>
<reference key="1">
    <citation type="journal article" date="2007" name="PLoS ONE">
        <title>Molecular correlates of host specialization in Staphylococcus aureus.</title>
        <authorList>
            <person name="Herron-Olson L."/>
            <person name="Fitzgerald J.R."/>
            <person name="Musser J.M."/>
            <person name="Kapur V."/>
        </authorList>
    </citation>
    <scope>NUCLEOTIDE SEQUENCE [LARGE SCALE GENOMIC DNA]</scope>
    <source>
        <strain>bovine RF122 / ET3-1</strain>
    </source>
</reference>
<comment type="function">
    <text evidence="1">Catalyzes the condensation of ATP and 5-phosphoribose 1-diphosphate to form N'-(5'-phosphoribosyl)-ATP (PR-ATP). Has a crucial role in the pathway because the rate of histidine biosynthesis seems to be controlled primarily by regulation of HisG enzymatic activity.</text>
</comment>
<comment type="catalytic activity">
    <reaction evidence="1">
        <text>1-(5-phospho-beta-D-ribosyl)-ATP + diphosphate = 5-phospho-alpha-D-ribose 1-diphosphate + ATP</text>
        <dbReference type="Rhea" id="RHEA:18473"/>
        <dbReference type="ChEBI" id="CHEBI:30616"/>
        <dbReference type="ChEBI" id="CHEBI:33019"/>
        <dbReference type="ChEBI" id="CHEBI:58017"/>
        <dbReference type="ChEBI" id="CHEBI:73183"/>
        <dbReference type="EC" id="2.4.2.17"/>
    </reaction>
</comment>
<comment type="pathway">
    <text evidence="1">Amino-acid biosynthesis; L-histidine biosynthesis; L-histidine from 5-phospho-alpha-D-ribose 1-diphosphate: step 1/9.</text>
</comment>
<comment type="subunit">
    <text evidence="1">Heteromultimer composed of HisG and HisZ subunits.</text>
</comment>
<comment type="subcellular location">
    <subcellularLocation>
        <location evidence="1">Cytoplasm</location>
    </subcellularLocation>
</comment>
<comment type="domain">
    <text>Lacks the C-terminal regulatory region which is replaced by HisZ.</text>
</comment>
<comment type="similarity">
    <text evidence="1">Belongs to the ATP phosphoribosyltransferase family. Short subfamily.</text>
</comment>
<proteinExistence type="inferred from homology"/>
<organism>
    <name type="scientific">Staphylococcus aureus (strain bovine RF122 / ET3-1)</name>
    <dbReference type="NCBI Taxonomy" id="273036"/>
    <lineage>
        <taxon>Bacteria</taxon>
        <taxon>Bacillati</taxon>
        <taxon>Bacillota</taxon>
        <taxon>Bacilli</taxon>
        <taxon>Bacillales</taxon>
        <taxon>Staphylococcaceae</taxon>
        <taxon>Staphylococcus</taxon>
    </lineage>
</organism>
<dbReference type="EC" id="2.4.2.17" evidence="1"/>
<dbReference type="EMBL" id="AJ938182">
    <property type="protein sequence ID" value="CAI82243.1"/>
    <property type="molecule type" value="Genomic_DNA"/>
</dbReference>
<dbReference type="RefSeq" id="WP_000944132.1">
    <property type="nucleotide sequence ID" value="NC_007622.1"/>
</dbReference>
<dbReference type="SMR" id="Q2YZB3"/>
<dbReference type="KEGG" id="sab:SAB2555c"/>
<dbReference type="HOGENOM" id="CLU_038115_2_0_9"/>
<dbReference type="UniPathway" id="UPA00031">
    <property type="reaction ID" value="UER00006"/>
</dbReference>
<dbReference type="GO" id="GO:0005737">
    <property type="term" value="C:cytoplasm"/>
    <property type="evidence" value="ECO:0007669"/>
    <property type="project" value="UniProtKB-SubCell"/>
</dbReference>
<dbReference type="GO" id="GO:0005524">
    <property type="term" value="F:ATP binding"/>
    <property type="evidence" value="ECO:0007669"/>
    <property type="project" value="UniProtKB-KW"/>
</dbReference>
<dbReference type="GO" id="GO:0003879">
    <property type="term" value="F:ATP phosphoribosyltransferase activity"/>
    <property type="evidence" value="ECO:0007669"/>
    <property type="project" value="UniProtKB-UniRule"/>
</dbReference>
<dbReference type="GO" id="GO:0000105">
    <property type="term" value="P:L-histidine biosynthetic process"/>
    <property type="evidence" value="ECO:0007669"/>
    <property type="project" value="UniProtKB-UniRule"/>
</dbReference>
<dbReference type="CDD" id="cd13595">
    <property type="entry name" value="PBP2_HisGs"/>
    <property type="match status" value="1"/>
</dbReference>
<dbReference type="FunFam" id="3.40.190.10:FF:000008">
    <property type="entry name" value="ATP phosphoribosyltransferase"/>
    <property type="match status" value="1"/>
</dbReference>
<dbReference type="Gene3D" id="3.40.190.10">
    <property type="entry name" value="Periplasmic binding protein-like II"/>
    <property type="match status" value="2"/>
</dbReference>
<dbReference type="HAMAP" id="MF_01018">
    <property type="entry name" value="HisG_Short"/>
    <property type="match status" value="1"/>
</dbReference>
<dbReference type="InterPro" id="IPR013820">
    <property type="entry name" value="ATP_PRibTrfase_cat"/>
</dbReference>
<dbReference type="InterPro" id="IPR001348">
    <property type="entry name" value="ATP_PRibTrfase_HisG"/>
</dbReference>
<dbReference type="InterPro" id="IPR024893">
    <property type="entry name" value="ATP_PRibTrfase_HisG_short"/>
</dbReference>
<dbReference type="NCBIfam" id="TIGR00070">
    <property type="entry name" value="hisG"/>
    <property type="match status" value="1"/>
</dbReference>
<dbReference type="PANTHER" id="PTHR21403:SF8">
    <property type="entry name" value="ATP PHOSPHORIBOSYLTRANSFERASE"/>
    <property type="match status" value="1"/>
</dbReference>
<dbReference type="PANTHER" id="PTHR21403">
    <property type="entry name" value="ATP PHOSPHORIBOSYLTRANSFERASE ATP-PRTASE"/>
    <property type="match status" value="1"/>
</dbReference>
<dbReference type="Pfam" id="PF01634">
    <property type="entry name" value="HisG"/>
    <property type="match status" value="1"/>
</dbReference>
<dbReference type="SUPFAM" id="SSF53850">
    <property type="entry name" value="Periplasmic binding protein-like II"/>
    <property type="match status" value="1"/>
</dbReference>
<feature type="chain" id="PRO_0000229333" description="ATP phosphoribosyltransferase">
    <location>
        <begin position="1"/>
        <end position="204"/>
    </location>
</feature>
<sequence length="204" mass="22562">MLRIAIAKGRLMDSLINYLDAIEFTTLSETLKNRERQLLLSVDNIECILVKGSDVPIYVEQGIADIGIVGSDILDERHYNVNNLLDMPFGACHFAVAAKPETTNYRKIATSYVHTAEAYFKSKGIDVELIKLNGSVELACVVDMVDGIVDIVQTGTTLEANGLVEKQHISDINARLITNKAAYFKKSQLIEQFIRSLEVSIANA</sequence>
<accession>Q2YZB3</accession>
<protein>
    <recommendedName>
        <fullName evidence="1">ATP phosphoribosyltransferase</fullName>
        <shortName evidence="1">ATP-PRT</shortName>
        <shortName evidence="1">ATP-PRTase</shortName>
        <ecNumber evidence="1">2.4.2.17</ecNumber>
    </recommendedName>
</protein>
<gene>
    <name evidence="1" type="primary">hisG</name>
    <name type="ordered locus">SAB2555c</name>
</gene>
<keyword id="KW-0028">Amino-acid biosynthesis</keyword>
<keyword id="KW-0067">ATP-binding</keyword>
<keyword id="KW-0963">Cytoplasm</keyword>
<keyword id="KW-0328">Glycosyltransferase</keyword>
<keyword id="KW-0368">Histidine biosynthesis</keyword>
<keyword id="KW-0547">Nucleotide-binding</keyword>
<keyword id="KW-0808">Transferase</keyword>
<evidence type="ECO:0000255" key="1">
    <source>
        <dbReference type="HAMAP-Rule" id="MF_01018"/>
    </source>
</evidence>